<geneLocation type="mitochondrion"/>
<name>COX2_LACK1</name>
<accession>Q9XLW8</accession>
<keyword id="KW-0186">Copper</keyword>
<keyword id="KW-0249">Electron transport</keyword>
<keyword id="KW-0460">Magnesium</keyword>
<keyword id="KW-0472">Membrane</keyword>
<keyword id="KW-0479">Metal-binding</keyword>
<keyword id="KW-0496">Mitochondrion</keyword>
<keyword id="KW-0999">Mitochondrion inner membrane</keyword>
<keyword id="KW-0679">Respiratory chain</keyword>
<keyword id="KW-0732">Signal</keyword>
<keyword id="KW-1278">Translocase</keyword>
<keyword id="KW-0812">Transmembrane</keyword>
<keyword id="KW-1133">Transmembrane helix</keyword>
<keyword id="KW-0813">Transport</keyword>
<organism>
    <name type="scientific">Lachancea kluyveri (strain ATCC 58438 / CBS 3082 / BCRC 21498 / NBRC 1685 / JCM 7257 / NCYC 543 / NRRL Y-12651)</name>
    <name type="common">Yeast</name>
    <name type="synonym">Saccharomyces kluyveri</name>
    <dbReference type="NCBI Taxonomy" id="226302"/>
    <lineage>
        <taxon>Eukaryota</taxon>
        <taxon>Fungi</taxon>
        <taxon>Dikarya</taxon>
        <taxon>Ascomycota</taxon>
        <taxon>Saccharomycotina</taxon>
        <taxon>Saccharomycetes</taxon>
        <taxon>Saccharomycetales</taxon>
        <taxon>Saccharomycetaceae</taxon>
        <taxon>Lachancea</taxon>
    </lineage>
</organism>
<reference key="1">
    <citation type="journal article" date="2000" name="Genetics">
        <title>Highly diverged homologs of Saccharomyces cerevisiae mitochondrial mRNA-specific translational activators have orthologous functions in other budding yeasts.</title>
        <authorList>
            <person name="Costanzo M.C."/>
            <person name="Bonnefoy N."/>
            <person name="Williams E.H."/>
            <person name="Clark-Walker G.D."/>
            <person name="Fox T.D."/>
        </authorList>
    </citation>
    <scope>NUCLEOTIDE SEQUENCE [GENOMIC DNA]</scope>
    <source>
        <strain>ATCC 58438 / CBS 3082 / BCRC 21498 / NBRC 1685 / JCM 7257 / NCYC 543 / NRRL Y-12651</strain>
    </source>
</reference>
<proteinExistence type="inferred from homology"/>
<feature type="signal peptide" evidence="1">
    <location>
        <begin position="1"/>
        <end position="15"/>
    </location>
</feature>
<feature type="chain" id="PRO_0000006042" description="Cytochrome c oxidase subunit 2">
    <location>
        <begin position="16"/>
        <end position="251"/>
    </location>
</feature>
<feature type="topological domain" description="Mitochondrial intermembrane" evidence="3">
    <location>
        <begin position="16"/>
        <end position="42"/>
    </location>
</feature>
<feature type="transmembrane region" description="Helical" evidence="3">
    <location>
        <begin position="43"/>
        <end position="64"/>
    </location>
</feature>
<feature type="topological domain" description="Mitochondrial matrix" evidence="3">
    <location>
        <begin position="65"/>
        <end position="82"/>
    </location>
</feature>
<feature type="transmembrane region" description="Helical" evidence="3">
    <location>
        <begin position="83"/>
        <end position="107"/>
    </location>
</feature>
<feature type="topological domain" description="Mitochondrial intermembrane" evidence="3">
    <location>
        <begin position="108"/>
        <end position="251"/>
    </location>
</feature>
<feature type="binding site" evidence="2">
    <location>
        <position position="186"/>
    </location>
    <ligand>
        <name>Cu cation</name>
        <dbReference type="ChEBI" id="CHEBI:23378"/>
        <label>A1</label>
    </ligand>
</feature>
<feature type="binding site" evidence="2">
    <location>
        <position position="221"/>
    </location>
    <ligand>
        <name>Cu cation</name>
        <dbReference type="ChEBI" id="CHEBI:23378"/>
        <label>A1</label>
    </ligand>
</feature>
<feature type="binding site" evidence="2">
    <location>
        <position position="221"/>
    </location>
    <ligand>
        <name>Cu cation</name>
        <dbReference type="ChEBI" id="CHEBI:23378"/>
        <label>A2</label>
    </ligand>
</feature>
<feature type="binding site" evidence="2">
    <location>
        <position position="223"/>
    </location>
    <ligand>
        <name>Cu cation</name>
        <dbReference type="ChEBI" id="CHEBI:23378"/>
        <label>A2</label>
    </ligand>
</feature>
<feature type="binding site" evidence="2">
    <location>
        <position position="223"/>
    </location>
    <ligand>
        <name>Mg(2+)</name>
        <dbReference type="ChEBI" id="CHEBI:18420"/>
        <note>ligand shared with subunit 1</note>
    </ligand>
</feature>
<feature type="binding site" evidence="2">
    <location>
        <position position="225"/>
    </location>
    <ligand>
        <name>Cu cation</name>
        <dbReference type="ChEBI" id="CHEBI:23378"/>
        <label>A1</label>
    </ligand>
</feature>
<feature type="binding site" evidence="2">
    <location>
        <position position="225"/>
    </location>
    <ligand>
        <name>Cu cation</name>
        <dbReference type="ChEBI" id="CHEBI:23378"/>
        <label>A2</label>
    </ligand>
</feature>
<feature type="binding site" evidence="2">
    <location>
        <position position="229"/>
    </location>
    <ligand>
        <name>Cu cation</name>
        <dbReference type="ChEBI" id="CHEBI:23378"/>
        <label>A2</label>
    </ligand>
</feature>
<feature type="binding site" evidence="2">
    <location>
        <position position="232"/>
    </location>
    <ligand>
        <name>Cu cation</name>
        <dbReference type="ChEBI" id="CHEBI:23378"/>
        <label>A1</label>
    </ligand>
</feature>
<protein>
    <recommendedName>
        <fullName>Cytochrome c oxidase subunit 2</fullName>
        <ecNumber>7.1.1.9</ecNumber>
    </recommendedName>
    <alternativeName>
        <fullName>Cytochrome c oxidase polypeptide II</fullName>
    </alternativeName>
</protein>
<sequence length="251" mass="28410">MLTFLSNLNNMIIMNDVPTPYGVYFQDSATPNQEGILELHDNIMFYLLVILGLVSWLLFTITRTYSKNPIAYKYIKHGQTIEIIWTIFPAVVLLIIAFPSFILLYLCDEVISPAMTIKAIGLQWYWKYEYSDFINESGETVEFESYVIPEDLLEDGQLRLLDTDTSVVVPVDTHIRFVVTAADVIHDFAIPSLGIKVDATPGRLNQVSALIQREGVFYGQCSELCGTAHSAMPIKIEAVSLPSFLEWLNEQ</sequence>
<gene>
    <name type="primary">COX2</name>
</gene>
<dbReference type="EC" id="7.1.1.9"/>
<dbReference type="EMBL" id="AF120715">
    <property type="protein sequence ID" value="AAD29122.1"/>
    <property type="molecule type" value="Genomic_DNA"/>
</dbReference>
<dbReference type="RefSeq" id="YP_006460459.1">
    <property type="nucleotide sequence ID" value="NC_018056.1"/>
</dbReference>
<dbReference type="SMR" id="Q9XLW8"/>
<dbReference type="GeneID" id="13083818"/>
<dbReference type="GO" id="GO:0005743">
    <property type="term" value="C:mitochondrial inner membrane"/>
    <property type="evidence" value="ECO:0007669"/>
    <property type="project" value="UniProtKB-SubCell"/>
</dbReference>
<dbReference type="GO" id="GO:0005507">
    <property type="term" value="F:copper ion binding"/>
    <property type="evidence" value="ECO:0007669"/>
    <property type="project" value="InterPro"/>
</dbReference>
<dbReference type="GO" id="GO:0004129">
    <property type="term" value="F:cytochrome-c oxidase activity"/>
    <property type="evidence" value="ECO:0007669"/>
    <property type="project" value="UniProtKB-EC"/>
</dbReference>
<dbReference type="GO" id="GO:0042773">
    <property type="term" value="P:ATP synthesis coupled electron transport"/>
    <property type="evidence" value="ECO:0007669"/>
    <property type="project" value="TreeGrafter"/>
</dbReference>
<dbReference type="CDD" id="cd13912">
    <property type="entry name" value="CcO_II_C"/>
    <property type="match status" value="1"/>
</dbReference>
<dbReference type="FunFam" id="1.10.287.90:FF:000004">
    <property type="entry name" value="Cytochrome c oxidase subunit 2"/>
    <property type="match status" value="1"/>
</dbReference>
<dbReference type="FunFam" id="2.60.40.420:FF:000001">
    <property type="entry name" value="Cytochrome c oxidase subunit 2"/>
    <property type="match status" value="1"/>
</dbReference>
<dbReference type="Gene3D" id="1.10.287.90">
    <property type="match status" value="1"/>
</dbReference>
<dbReference type="Gene3D" id="2.60.40.420">
    <property type="entry name" value="Cupredoxins - blue copper proteins"/>
    <property type="match status" value="1"/>
</dbReference>
<dbReference type="InterPro" id="IPR045187">
    <property type="entry name" value="CcO_II"/>
</dbReference>
<dbReference type="InterPro" id="IPR002429">
    <property type="entry name" value="CcO_II-like_C"/>
</dbReference>
<dbReference type="InterPro" id="IPR034210">
    <property type="entry name" value="CcO_II_C"/>
</dbReference>
<dbReference type="InterPro" id="IPR001505">
    <property type="entry name" value="Copper_CuA"/>
</dbReference>
<dbReference type="InterPro" id="IPR008972">
    <property type="entry name" value="Cupredoxin"/>
</dbReference>
<dbReference type="InterPro" id="IPR014222">
    <property type="entry name" value="Cyt_c_oxidase_su2"/>
</dbReference>
<dbReference type="InterPro" id="IPR011759">
    <property type="entry name" value="Cyt_c_oxidase_su2_TM_dom"/>
</dbReference>
<dbReference type="InterPro" id="IPR036257">
    <property type="entry name" value="Cyt_c_oxidase_su2_TM_sf"/>
</dbReference>
<dbReference type="NCBIfam" id="TIGR02866">
    <property type="entry name" value="CoxB"/>
    <property type="match status" value="1"/>
</dbReference>
<dbReference type="PANTHER" id="PTHR22888:SF9">
    <property type="entry name" value="CYTOCHROME C OXIDASE SUBUNIT 2"/>
    <property type="match status" value="1"/>
</dbReference>
<dbReference type="PANTHER" id="PTHR22888">
    <property type="entry name" value="CYTOCHROME C OXIDASE, SUBUNIT II"/>
    <property type="match status" value="1"/>
</dbReference>
<dbReference type="Pfam" id="PF00116">
    <property type="entry name" value="COX2"/>
    <property type="match status" value="1"/>
</dbReference>
<dbReference type="Pfam" id="PF02790">
    <property type="entry name" value="COX2_TM"/>
    <property type="match status" value="1"/>
</dbReference>
<dbReference type="PRINTS" id="PR01166">
    <property type="entry name" value="CYCOXIDASEII"/>
</dbReference>
<dbReference type="SUPFAM" id="SSF49503">
    <property type="entry name" value="Cupredoxins"/>
    <property type="match status" value="1"/>
</dbReference>
<dbReference type="SUPFAM" id="SSF81464">
    <property type="entry name" value="Cytochrome c oxidase subunit II-like, transmembrane region"/>
    <property type="match status" value="1"/>
</dbReference>
<dbReference type="PROSITE" id="PS00078">
    <property type="entry name" value="COX2"/>
    <property type="match status" value="1"/>
</dbReference>
<dbReference type="PROSITE" id="PS50857">
    <property type="entry name" value="COX2_CUA"/>
    <property type="match status" value="1"/>
</dbReference>
<dbReference type="PROSITE" id="PS50999">
    <property type="entry name" value="COX2_TM"/>
    <property type="match status" value="1"/>
</dbReference>
<evidence type="ECO:0000250" key="1"/>
<evidence type="ECO:0000250" key="2">
    <source>
        <dbReference type="UniProtKB" id="P00410"/>
    </source>
</evidence>
<evidence type="ECO:0000255" key="3"/>
<evidence type="ECO:0000305" key="4"/>
<comment type="function">
    <text evidence="2">Component of the cytochrome c oxidase, the last enzyme in the mitochondrial electron transport chain which drives oxidative phosphorylation. The respiratory chain contains 3 multisubunit complexes succinate dehydrogenase (complex II, CII), ubiquinol-cytochrome c oxidoreductase (cytochrome b-c1 complex, complex III, CIII) and cytochrome c oxidase (complex IV, CIV), that cooperate to transfer electrons derived from NADH and succinate to molecular oxygen, creating an electrochemical gradient over the inner membrane that drives transmembrane transport and the ATP synthase. Cytochrome c oxidase is the component of the respiratory chain that catalyzes the reduction of oxygen to water. Electrons originating from reduced cytochrome c in the intermembrane space (IMS) are transferred via the dinuclear copper A center (CU(A)) of subunit 2 and heme A of subunit 1 to the active site in subunit 1, a binuclear center (BNC) formed by heme A3 and copper B (CU(B)). The BNC reduces molecular oxygen to 2 water molecules using 4 electrons from cytochrome c in the IMS and 4 protons from the mitochondrial matrix.</text>
</comment>
<comment type="catalytic activity">
    <reaction evidence="2">
        <text>4 Fe(II)-[cytochrome c] + O2 + 8 H(+)(in) = 4 Fe(III)-[cytochrome c] + 2 H2O + 4 H(+)(out)</text>
        <dbReference type="Rhea" id="RHEA:11436"/>
        <dbReference type="Rhea" id="RHEA-COMP:10350"/>
        <dbReference type="Rhea" id="RHEA-COMP:14399"/>
        <dbReference type="ChEBI" id="CHEBI:15377"/>
        <dbReference type="ChEBI" id="CHEBI:15378"/>
        <dbReference type="ChEBI" id="CHEBI:15379"/>
        <dbReference type="ChEBI" id="CHEBI:29033"/>
        <dbReference type="ChEBI" id="CHEBI:29034"/>
        <dbReference type="EC" id="7.1.1.9"/>
    </reaction>
    <physiologicalReaction direction="left-to-right" evidence="2">
        <dbReference type="Rhea" id="RHEA:11437"/>
    </physiologicalReaction>
</comment>
<comment type="cofactor">
    <cofactor evidence="2">
        <name>Cu cation</name>
        <dbReference type="ChEBI" id="CHEBI:23378"/>
    </cofactor>
    <text evidence="2">Binds a dinuclear copper A center per subunit.</text>
</comment>
<comment type="subunit">
    <text evidence="2">Component of the cytochrome c oxidase (complex IV, CIV), a multisubunit enzyme composed of a catalytic core of 3 subunits and several supernumerary subunits. The complex exists as a monomer or a dimer and forms supercomplexes (SCs) in the inner mitochondrial membrane with ubiquinol-cytochrome c oxidoreductase (cytochrome b-c1 complex, complex III, CIII).</text>
</comment>
<comment type="subcellular location">
    <subcellularLocation>
        <location evidence="2">Mitochondrion inner membrane</location>
        <topology evidence="2">Multi-pass membrane protein</topology>
    </subcellularLocation>
</comment>
<comment type="PTM">
    <text evidence="1">The signal sequence of COX2 is processed by IMP1.</text>
</comment>
<comment type="similarity">
    <text evidence="4">Belongs to the cytochrome c oxidase subunit 2 family.</text>
</comment>